<protein>
    <recommendedName>
        <fullName evidence="1">CCA-adding enzyme</fullName>
        <ecNumber evidence="1">2.7.7.72</ecNumber>
    </recommendedName>
    <alternativeName>
        <fullName evidence="1">CCA tRNA nucleotidyltransferase</fullName>
    </alternativeName>
    <alternativeName>
        <fullName evidence="1">tRNA CCA-pyrophosphorylase</fullName>
    </alternativeName>
    <alternativeName>
        <fullName evidence="1">tRNA adenylyl-/cytidylyl- transferase</fullName>
    </alternativeName>
    <alternativeName>
        <fullName evidence="1">tRNA nucleotidyltransferase</fullName>
    </alternativeName>
    <alternativeName>
        <fullName evidence="1">tRNA-NT</fullName>
    </alternativeName>
</protein>
<comment type="function">
    <text evidence="1">Catalyzes the addition and repair of the essential 3'-terminal CCA sequence in tRNAs without using a nucleic acid template. Adds these three nucleotides in the order of C, C, and A to the tRNA nucleotide-73, using CTP and ATP as substrates and producing inorganic pyrophosphate. tRNA 3'-terminal CCA addition is required both for tRNA processing and repair. Also involved in tRNA surveillance by mediating tandem CCA addition to generate a CCACCA at the 3' terminus of unstable tRNAs. While stable tRNAs receive only 3'-terminal CCA, unstable tRNAs are marked with CCACCA and rapidly degraded.</text>
</comment>
<comment type="catalytic activity">
    <reaction evidence="1">
        <text>a tRNA precursor + 2 CTP + ATP = a tRNA with a 3' CCA end + 3 diphosphate</text>
        <dbReference type="Rhea" id="RHEA:14433"/>
        <dbReference type="Rhea" id="RHEA-COMP:10465"/>
        <dbReference type="Rhea" id="RHEA-COMP:10468"/>
        <dbReference type="ChEBI" id="CHEBI:30616"/>
        <dbReference type="ChEBI" id="CHEBI:33019"/>
        <dbReference type="ChEBI" id="CHEBI:37563"/>
        <dbReference type="ChEBI" id="CHEBI:74896"/>
        <dbReference type="ChEBI" id="CHEBI:83071"/>
        <dbReference type="EC" id="2.7.7.72"/>
    </reaction>
</comment>
<comment type="catalytic activity">
    <reaction evidence="1">
        <text>a tRNA with a 3' CCA end + 2 CTP + ATP = a tRNA with a 3' CCACCA end + 3 diphosphate</text>
        <dbReference type="Rhea" id="RHEA:76235"/>
        <dbReference type="Rhea" id="RHEA-COMP:10468"/>
        <dbReference type="Rhea" id="RHEA-COMP:18655"/>
        <dbReference type="ChEBI" id="CHEBI:30616"/>
        <dbReference type="ChEBI" id="CHEBI:33019"/>
        <dbReference type="ChEBI" id="CHEBI:37563"/>
        <dbReference type="ChEBI" id="CHEBI:83071"/>
        <dbReference type="ChEBI" id="CHEBI:195187"/>
    </reaction>
    <physiologicalReaction direction="left-to-right" evidence="1">
        <dbReference type="Rhea" id="RHEA:76236"/>
    </physiologicalReaction>
</comment>
<comment type="cofactor">
    <cofactor evidence="1">
        <name>Mg(2+)</name>
        <dbReference type="ChEBI" id="CHEBI:18420"/>
    </cofactor>
</comment>
<comment type="miscellaneous">
    <text evidence="1">A single active site specifically recognizes both ATP and CTP and is responsible for their addition.</text>
</comment>
<comment type="similarity">
    <text evidence="1">Belongs to the tRNA nucleotidyltransferase/poly(A) polymerase family. Bacterial CCA-adding enzyme type 2 subfamily.</text>
</comment>
<reference key="1">
    <citation type="submission" date="2008-02" db="EMBL/GenBank/DDBJ databases">
        <title>Complete sequence of Pseudomonas putida W619.</title>
        <authorList>
            <person name="Copeland A."/>
            <person name="Lucas S."/>
            <person name="Lapidus A."/>
            <person name="Barry K."/>
            <person name="Detter J.C."/>
            <person name="Glavina del Rio T."/>
            <person name="Dalin E."/>
            <person name="Tice H."/>
            <person name="Pitluck S."/>
            <person name="Chain P."/>
            <person name="Malfatti S."/>
            <person name="Shin M."/>
            <person name="Vergez L."/>
            <person name="Schmutz J."/>
            <person name="Larimer F."/>
            <person name="Land M."/>
            <person name="Hauser L."/>
            <person name="Kyrpides N."/>
            <person name="Kim E."/>
            <person name="Taghavi S."/>
            <person name="Vangronsveld D."/>
            <person name="van der Lelie D."/>
            <person name="Richardson P."/>
        </authorList>
    </citation>
    <scope>NUCLEOTIDE SEQUENCE [LARGE SCALE GENOMIC DNA]</scope>
    <source>
        <strain>W619</strain>
    </source>
</reference>
<dbReference type="EC" id="2.7.7.72" evidence="1"/>
<dbReference type="EMBL" id="CP000949">
    <property type="protein sequence ID" value="ACA75284.1"/>
    <property type="molecule type" value="Genomic_DNA"/>
</dbReference>
<dbReference type="SMR" id="B1JDY1"/>
<dbReference type="STRING" id="390235.PputW619_4808"/>
<dbReference type="KEGG" id="ppw:PputW619_4808"/>
<dbReference type="eggNOG" id="COG0617">
    <property type="taxonomic scope" value="Bacteria"/>
</dbReference>
<dbReference type="HOGENOM" id="CLU_015961_1_0_6"/>
<dbReference type="OrthoDB" id="9805698at2"/>
<dbReference type="GO" id="GO:0005524">
    <property type="term" value="F:ATP binding"/>
    <property type="evidence" value="ECO:0007669"/>
    <property type="project" value="UniProtKB-UniRule"/>
</dbReference>
<dbReference type="GO" id="GO:0004810">
    <property type="term" value="F:CCA tRNA nucleotidyltransferase activity"/>
    <property type="evidence" value="ECO:0007669"/>
    <property type="project" value="UniProtKB-UniRule"/>
</dbReference>
<dbReference type="GO" id="GO:0000287">
    <property type="term" value="F:magnesium ion binding"/>
    <property type="evidence" value="ECO:0007669"/>
    <property type="project" value="UniProtKB-UniRule"/>
</dbReference>
<dbReference type="GO" id="GO:0000049">
    <property type="term" value="F:tRNA binding"/>
    <property type="evidence" value="ECO:0007669"/>
    <property type="project" value="UniProtKB-UniRule"/>
</dbReference>
<dbReference type="GO" id="GO:0042245">
    <property type="term" value="P:RNA repair"/>
    <property type="evidence" value="ECO:0007669"/>
    <property type="project" value="UniProtKB-KW"/>
</dbReference>
<dbReference type="GO" id="GO:0001680">
    <property type="term" value="P:tRNA 3'-terminal CCA addition"/>
    <property type="evidence" value="ECO:0007669"/>
    <property type="project" value="UniProtKB-UniRule"/>
</dbReference>
<dbReference type="CDD" id="cd05398">
    <property type="entry name" value="NT_ClassII-CCAase"/>
    <property type="match status" value="1"/>
</dbReference>
<dbReference type="Gene3D" id="3.30.460.10">
    <property type="entry name" value="Beta Polymerase, domain 2"/>
    <property type="match status" value="1"/>
</dbReference>
<dbReference type="Gene3D" id="1.10.3090.10">
    <property type="entry name" value="cca-adding enzyme, domain 2"/>
    <property type="match status" value="1"/>
</dbReference>
<dbReference type="HAMAP" id="MF_01262">
    <property type="entry name" value="CCA_bact_type2"/>
    <property type="match status" value="1"/>
</dbReference>
<dbReference type="InterPro" id="IPR012006">
    <property type="entry name" value="CCA_bact"/>
</dbReference>
<dbReference type="InterPro" id="IPR043519">
    <property type="entry name" value="NT_sf"/>
</dbReference>
<dbReference type="InterPro" id="IPR002646">
    <property type="entry name" value="PolA_pol_head_dom"/>
</dbReference>
<dbReference type="InterPro" id="IPR032828">
    <property type="entry name" value="PolyA_RNA-bd"/>
</dbReference>
<dbReference type="InterPro" id="IPR050124">
    <property type="entry name" value="tRNA_CCA-adding_enzyme"/>
</dbReference>
<dbReference type="NCBIfam" id="NF008137">
    <property type="entry name" value="PRK10885.1"/>
    <property type="match status" value="1"/>
</dbReference>
<dbReference type="PANTHER" id="PTHR47545">
    <property type="entry name" value="MULTIFUNCTIONAL CCA PROTEIN"/>
    <property type="match status" value="1"/>
</dbReference>
<dbReference type="PANTHER" id="PTHR47545:SF1">
    <property type="entry name" value="MULTIFUNCTIONAL CCA PROTEIN"/>
    <property type="match status" value="1"/>
</dbReference>
<dbReference type="Pfam" id="PF01743">
    <property type="entry name" value="PolyA_pol"/>
    <property type="match status" value="1"/>
</dbReference>
<dbReference type="Pfam" id="PF12627">
    <property type="entry name" value="PolyA_pol_RNAbd"/>
    <property type="match status" value="1"/>
</dbReference>
<dbReference type="PIRSF" id="PIRSF000813">
    <property type="entry name" value="CCA_bact"/>
    <property type="match status" value="1"/>
</dbReference>
<dbReference type="SUPFAM" id="SSF81301">
    <property type="entry name" value="Nucleotidyltransferase"/>
    <property type="match status" value="1"/>
</dbReference>
<dbReference type="SUPFAM" id="SSF81891">
    <property type="entry name" value="Poly A polymerase C-terminal region-like"/>
    <property type="match status" value="1"/>
</dbReference>
<name>CCA_PSEPW</name>
<organism>
    <name type="scientific">Pseudomonas putida (strain W619)</name>
    <dbReference type="NCBI Taxonomy" id="390235"/>
    <lineage>
        <taxon>Bacteria</taxon>
        <taxon>Pseudomonadati</taxon>
        <taxon>Pseudomonadota</taxon>
        <taxon>Gammaproteobacteria</taxon>
        <taxon>Pseudomonadales</taxon>
        <taxon>Pseudomonadaceae</taxon>
        <taxon>Pseudomonas</taxon>
    </lineage>
</organism>
<evidence type="ECO:0000255" key="1">
    <source>
        <dbReference type="HAMAP-Rule" id="MF_01262"/>
    </source>
</evidence>
<sequence length="370" mass="41050">MQIYKVGGAVRDRLLGRPVSDIDWLVVGASVEEMHAKGFRPVGADFPVFLHPKTGEEYALARTERKSGRGYGGFTFHASPEVTLEEDLIRRDLTINAMAEDDQGNVLDPFHGRADLEQRLLRHVSPAFAEDPLRVLRVARFAARYAPLGFRVADETLELMKQIAASGELQALTAERSWKEIERALMEDEPQVFINVLSDCAALKQLMPELEGDAAALAALTQAAEHHQPLHIRWACLLHNLKPASIKALNQRFKAPRECQELAMLVGECASNGHRALQLEPEDMLALLQKFDVYRRPQRFEDFISVCQMVARGSGQAYPQADYLRAAAAAARAVEAKPLVEAGLTGQALGEALRHQRLEALKAYKANAEN</sequence>
<proteinExistence type="inferred from homology"/>
<keyword id="KW-0067">ATP-binding</keyword>
<keyword id="KW-0460">Magnesium</keyword>
<keyword id="KW-0479">Metal-binding</keyword>
<keyword id="KW-0547">Nucleotide-binding</keyword>
<keyword id="KW-0548">Nucleotidyltransferase</keyword>
<keyword id="KW-0692">RNA repair</keyword>
<keyword id="KW-0694">RNA-binding</keyword>
<keyword id="KW-0808">Transferase</keyword>
<keyword id="KW-0819">tRNA processing</keyword>
<feature type="chain" id="PRO_1000140066" description="CCA-adding enzyme">
    <location>
        <begin position="1"/>
        <end position="370"/>
    </location>
</feature>
<feature type="binding site" evidence="1">
    <location>
        <position position="8"/>
    </location>
    <ligand>
        <name>ATP</name>
        <dbReference type="ChEBI" id="CHEBI:30616"/>
    </ligand>
</feature>
<feature type="binding site" evidence="1">
    <location>
        <position position="8"/>
    </location>
    <ligand>
        <name>CTP</name>
        <dbReference type="ChEBI" id="CHEBI:37563"/>
    </ligand>
</feature>
<feature type="binding site" evidence="1">
    <location>
        <position position="11"/>
    </location>
    <ligand>
        <name>ATP</name>
        <dbReference type="ChEBI" id="CHEBI:30616"/>
    </ligand>
</feature>
<feature type="binding site" evidence="1">
    <location>
        <position position="11"/>
    </location>
    <ligand>
        <name>CTP</name>
        <dbReference type="ChEBI" id="CHEBI:37563"/>
    </ligand>
</feature>
<feature type="binding site" evidence="1">
    <location>
        <position position="21"/>
    </location>
    <ligand>
        <name>Mg(2+)</name>
        <dbReference type="ChEBI" id="CHEBI:18420"/>
    </ligand>
</feature>
<feature type="binding site" evidence="1">
    <location>
        <position position="23"/>
    </location>
    <ligand>
        <name>Mg(2+)</name>
        <dbReference type="ChEBI" id="CHEBI:18420"/>
    </ligand>
</feature>
<feature type="binding site" evidence="1">
    <location>
        <position position="91"/>
    </location>
    <ligand>
        <name>ATP</name>
        <dbReference type="ChEBI" id="CHEBI:30616"/>
    </ligand>
</feature>
<feature type="binding site" evidence="1">
    <location>
        <position position="91"/>
    </location>
    <ligand>
        <name>CTP</name>
        <dbReference type="ChEBI" id="CHEBI:37563"/>
    </ligand>
</feature>
<feature type="binding site" evidence="1">
    <location>
        <position position="137"/>
    </location>
    <ligand>
        <name>ATP</name>
        <dbReference type="ChEBI" id="CHEBI:30616"/>
    </ligand>
</feature>
<feature type="binding site" evidence="1">
    <location>
        <position position="137"/>
    </location>
    <ligand>
        <name>CTP</name>
        <dbReference type="ChEBI" id="CHEBI:37563"/>
    </ligand>
</feature>
<feature type="binding site" evidence="1">
    <location>
        <position position="140"/>
    </location>
    <ligand>
        <name>ATP</name>
        <dbReference type="ChEBI" id="CHEBI:30616"/>
    </ligand>
</feature>
<feature type="binding site" evidence="1">
    <location>
        <position position="140"/>
    </location>
    <ligand>
        <name>CTP</name>
        <dbReference type="ChEBI" id="CHEBI:37563"/>
    </ligand>
</feature>
<gene>
    <name evidence="1" type="primary">cca</name>
    <name type="ordered locus">PputW619_4808</name>
</gene>
<accession>B1JDY1</accession>